<gene>
    <name evidence="2" type="primary">infB</name>
    <name type="ordered locus">Acel_1515</name>
</gene>
<accession>A0LV27</accession>
<keyword id="KW-0963">Cytoplasm</keyword>
<keyword id="KW-0342">GTP-binding</keyword>
<keyword id="KW-0396">Initiation factor</keyword>
<keyword id="KW-0547">Nucleotide-binding</keyword>
<keyword id="KW-0648">Protein biosynthesis</keyword>
<keyword id="KW-1185">Reference proteome</keyword>
<organism>
    <name type="scientific">Acidothermus cellulolyticus (strain ATCC 43068 / DSM 8971 / 11B)</name>
    <dbReference type="NCBI Taxonomy" id="351607"/>
    <lineage>
        <taxon>Bacteria</taxon>
        <taxon>Bacillati</taxon>
        <taxon>Actinomycetota</taxon>
        <taxon>Actinomycetes</taxon>
        <taxon>Acidothermales</taxon>
        <taxon>Acidothermaceae</taxon>
        <taxon>Acidothermus</taxon>
    </lineage>
</organism>
<comment type="function">
    <text evidence="2">One of the essential components for the initiation of protein synthesis. Protects formylmethionyl-tRNA from spontaneous hydrolysis and promotes its binding to the 30S ribosomal subunits. Also involved in the hydrolysis of GTP during the formation of the 70S ribosomal complex.</text>
</comment>
<comment type="subcellular location">
    <subcellularLocation>
        <location evidence="2">Cytoplasm</location>
    </subcellularLocation>
</comment>
<comment type="similarity">
    <text evidence="2">Belongs to the TRAFAC class translation factor GTPase superfamily. Classic translation factor GTPase family. IF-2 subfamily.</text>
</comment>
<proteinExistence type="inferred from homology"/>
<name>IF2_ACIC1</name>
<sequence length="879" mass="92534">MAKVRVYELAKELNVESKTLLAKLHELGEFVRSASSTIEAPVVRKLREAFPPPPEPAAGNGSAAQPTAKPSAAKSTGKTTEPAADAAAPPAVTTPPSAAPAGATTSAPSDAGGEKIATPPRPVKLPQPPRPAPAVPKPPSGPPRMGNNPFTSPMPRPMPPRPVQRPTGTPGTPGIPRPPLRPGAPGRPTPGAMPPRPAAGRAAPGRGAPIRLPGGLGRAPAPPSAGRPGVGGRGRGAPGGAFGRGPGAKPSRPHKSKKQRRQEFDNLQAPVIGGIQIPRGNGQVVRLPRGASLADFADKIGANPASLVQVAFHLGEMVTATQSVNEETLQLLGAELGYEVQIVSPEDEDRELLESFDIELGTDQGDEAALVPRPPVVTVMGHVDHGKTKLLDAIRNTNVAAREHGGITQHIGAYQVTAQTADGPRQITFIDTPGHEAFTAMRARGAQVTDIAVLVVAADDGVMPQTVEALNHAKAADVPIVVAVNKIDKPGADPVKVRGQLTEYGLVAEEYGGDTMFVDVSALTGQGIDDLLEAILLTADAALDLRANPNQPAQGVAIEAHLDRGRGPVATVLVQRGTLRVGDSIVAGEAFGRVRAMLDEFGQPVEEAGPSRPVQVLGFTSVPDAGDTFLVVPEDRVARQIAERRAARERNAQLAASRRRRTLEDILERMEKGEVAELRLILKGDVSGSVEALEDALLKIDVGDEARIRVIDRGVGAITENNVMLAVASDAIIIGFNVRPEGKARELAEREGVDVRYYSVIYQAIEDVEAALKGLLKPVYEEVQLGTAEVREVFRSSKFGNIAGCLVRSGTITRGAKARVVRDGVVVANDVSIASLRRFKDDVTEVREGFECGVGLGSFNDIRVGDVIETYEMREKPRS</sequence>
<dbReference type="EMBL" id="CP000481">
    <property type="protein sequence ID" value="ABK53287.1"/>
    <property type="molecule type" value="Genomic_DNA"/>
</dbReference>
<dbReference type="RefSeq" id="WP_011720350.1">
    <property type="nucleotide sequence ID" value="NC_008578.1"/>
</dbReference>
<dbReference type="SMR" id="A0LV27"/>
<dbReference type="FunCoup" id="A0LV27">
    <property type="interactions" value="323"/>
</dbReference>
<dbReference type="STRING" id="351607.Acel_1515"/>
<dbReference type="KEGG" id="ace:Acel_1515"/>
<dbReference type="eggNOG" id="COG0532">
    <property type="taxonomic scope" value="Bacteria"/>
</dbReference>
<dbReference type="HOGENOM" id="CLU_006301_9_3_11"/>
<dbReference type="InParanoid" id="A0LV27"/>
<dbReference type="OrthoDB" id="9811804at2"/>
<dbReference type="Proteomes" id="UP000008221">
    <property type="component" value="Chromosome"/>
</dbReference>
<dbReference type="GO" id="GO:0005829">
    <property type="term" value="C:cytosol"/>
    <property type="evidence" value="ECO:0007669"/>
    <property type="project" value="TreeGrafter"/>
</dbReference>
<dbReference type="GO" id="GO:0005525">
    <property type="term" value="F:GTP binding"/>
    <property type="evidence" value="ECO:0007669"/>
    <property type="project" value="UniProtKB-KW"/>
</dbReference>
<dbReference type="GO" id="GO:0003924">
    <property type="term" value="F:GTPase activity"/>
    <property type="evidence" value="ECO:0007669"/>
    <property type="project" value="UniProtKB-UniRule"/>
</dbReference>
<dbReference type="GO" id="GO:0003743">
    <property type="term" value="F:translation initiation factor activity"/>
    <property type="evidence" value="ECO:0007669"/>
    <property type="project" value="UniProtKB-UniRule"/>
</dbReference>
<dbReference type="CDD" id="cd01887">
    <property type="entry name" value="IF2_eIF5B"/>
    <property type="match status" value="1"/>
</dbReference>
<dbReference type="CDD" id="cd03702">
    <property type="entry name" value="IF2_mtIF2_II"/>
    <property type="match status" value="1"/>
</dbReference>
<dbReference type="CDD" id="cd03692">
    <property type="entry name" value="mtIF2_IVc"/>
    <property type="match status" value="1"/>
</dbReference>
<dbReference type="FunFam" id="1.10.10.2480:FF:000003">
    <property type="entry name" value="Translation initiation factor IF-2"/>
    <property type="match status" value="1"/>
</dbReference>
<dbReference type="FunFam" id="2.40.30.10:FF:000007">
    <property type="entry name" value="Translation initiation factor IF-2"/>
    <property type="match status" value="1"/>
</dbReference>
<dbReference type="FunFam" id="2.40.30.10:FF:000008">
    <property type="entry name" value="Translation initiation factor IF-2"/>
    <property type="match status" value="1"/>
</dbReference>
<dbReference type="FunFam" id="3.40.50.10050:FF:000001">
    <property type="entry name" value="Translation initiation factor IF-2"/>
    <property type="match status" value="1"/>
</dbReference>
<dbReference type="FunFam" id="3.40.50.300:FF:000019">
    <property type="entry name" value="Translation initiation factor IF-2"/>
    <property type="match status" value="1"/>
</dbReference>
<dbReference type="Gene3D" id="1.10.10.2480">
    <property type="match status" value="1"/>
</dbReference>
<dbReference type="Gene3D" id="3.40.50.300">
    <property type="entry name" value="P-loop containing nucleotide triphosphate hydrolases"/>
    <property type="match status" value="1"/>
</dbReference>
<dbReference type="Gene3D" id="2.40.30.10">
    <property type="entry name" value="Translation factors"/>
    <property type="match status" value="2"/>
</dbReference>
<dbReference type="Gene3D" id="3.40.50.10050">
    <property type="entry name" value="Translation initiation factor IF- 2, domain 3"/>
    <property type="match status" value="1"/>
</dbReference>
<dbReference type="HAMAP" id="MF_00100_B">
    <property type="entry name" value="IF_2_B"/>
    <property type="match status" value="1"/>
</dbReference>
<dbReference type="InterPro" id="IPR053905">
    <property type="entry name" value="EF-G-like_DII"/>
</dbReference>
<dbReference type="InterPro" id="IPR044145">
    <property type="entry name" value="IF2_II"/>
</dbReference>
<dbReference type="InterPro" id="IPR006847">
    <property type="entry name" value="IF2_N"/>
</dbReference>
<dbReference type="InterPro" id="IPR027417">
    <property type="entry name" value="P-loop_NTPase"/>
</dbReference>
<dbReference type="InterPro" id="IPR005225">
    <property type="entry name" value="Small_GTP-bd"/>
</dbReference>
<dbReference type="InterPro" id="IPR000795">
    <property type="entry name" value="T_Tr_GTP-bd_dom"/>
</dbReference>
<dbReference type="InterPro" id="IPR000178">
    <property type="entry name" value="TF_IF2_bacterial-like"/>
</dbReference>
<dbReference type="InterPro" id="IPR015760">
    <property type="entry name" value="TIF_IF2"/>
</dbReference>
<dbReference type="InterPro" id="IPR023115">
    <property type="entry name" value="TIF_IF2_dom3"/>
</dbReference>
<dbReference type="InterPro" id="IPR036925">
    <property type="entry name" value="TIF_IF2_dom3_sf"/>
</dbReference>
<dbReference type="InterPro" id="IPR009000">
    <property type="entry name" value="Transl_B-barrel_sf"/>
</dbReference>
<dbReference type="NCBIfam" id="TIGR00487">
    <property type="entry name" value="IF-2"/>
    <property type="match status" value="1"/>
</dbReference>
<dbReference type="NCBIfam" id="TIGR00231">
    <property type="entry name" value="small_GTP"/>
    <property type="match status" value="1"/>
</dbReference>
<dbReference type="PANTHER" id="PTHR43381:SF5">
    <property type="entry name" value="TR-TYPE G DOMAIN-CONTAINING PROTEIN"/>
    <property type="match status" value="1"/>
</dbReference>
<dbReference type="PANTHER" id="PTHR43381">
    <property type="entry name" value="TRANSLATION INITIATION FACTOR IF-2-RELATED"/>
    <property type="match status" value="1"/>
</dbReference>
<dbReference type="Pfam" id="PF22042">
    <property type="entry name" value="EF-G_D2"/>
    <property type="match status" value="1"/>
</dbReference>
<dbReference type="Pfam" id="PF00009">
    <property type="entry name" value="GTP_EFTU"/>
    <property type="match status" value="1"/>
</dbReference>
<dbReference type="Pfam" id="PF11987">
    <property type="entry name" value="IF-2"/>
    <property type="match status" value="1"/>
</dbReference>
<dbReference type="Pfam" id="PF04760">
    <property type="entry name" value="IF2_N"/>
    <property type="match status" value="2"/>
</dbReference>
<dbReference type="PRINTS" id="PR00315">
    <property type="entry name" value="ELONGATNFCT"/>
</dbReference>
<dbReference type="SUPFAM" id="SSF52156">
    <property type="entry name" value="Initiation factor IF2/eIF5b, domain 3"/>
    <property type="match status" value="1"/>
</dbReference>
<dbReference type="SUPFAM" id="SSF52540">
    <property type="entry name" value="P-loop containing nucleoside triphosphate hydrolases"/>
    <property type="match status" value="1"/>
</dbReference>
<dbReference type="SUPFAM" id="SSF50447">
    <property type="entry name" value="Translation proteins"/>
    <property type="match status" value="2"/>
</dbReference>
<dbReference type="PROSITE" id="PS51722">
    <property type="entry name" value="G_TR_2"/>
    <property type="match status" value="1"/>
</dbReference>
<protein>
    <recommendedName>
        <fullName evidence="2">Translation initiation factor IF-2</fullName>
    </recommendedName>
</protein>
<feature type="chain" id="PRO_1000008188" description="Translation initiation factor IF-2">
    <location>
        <begin position="1"/>
        <end position="879"/>
    </location>
</feature>
<feature type="domain" description="tr-type G">
    <location>
        <begin position="372"/>
        <end position="543"/>
    </location>
</feature>
<feature type="region of interest" description="Disordered" evidence="3">
    <location>
        <begin position="48"/>
        <end position="261"/>
    </location>
</feature>
<feature type="region of interest" description="G1" evidence="1">
    <location>
        <begin position="381"/>
        <end position="388"/>
    </location>
</feature>
<feature type="region of interest" description="G2" evidence="1">
    <location>
        <begin position="406"/>
        <end position="410"/>
    </location>
</feature>
<feature type="region of interest" description="G3" evidence="1">
    <location>
        <begin position="431"/>
        <end position="434"/>
    </location>
</feature>
<feature type="region of interest" description="G4" evidence="1">
    <location>
        <begin position="485"/>
        <end position="488"/>
    </location>
</feature>
<feature type="region of interest" description="G5" evidence="1">
    <location>
        <begin position="521"/>
        <end position="523"/>
    </location>
</feature>
<feature type="compositionally biased region" description="Low complexity" evidence="3">
    <location>
        <begin position="82"/>
        <end position="111"/>
    </location>
</feature>
<feature type="compositionally biased region" description="Pro residues" evidence="3">
    <location>
        <begin position="119"/>
        <end position="142"/>
    </location>
</feature>
<feature type="compositionally biased region" description="Pro residues" evidence="3">
    <location>
        <begin position="152"/>
        <end position="163"/>
    </location>
</feature>
<feature type="compositionally biased region" description="Pro residues" evidence="3">
    <location>
        <begin position="173"/>
        <end position="197"/>
    </location>
</feature>
<feature type="compositionally biased region" description="Low complexity" evidence="3">
    <location>
        <begin position="198"/>
        <end position="213"/>
    </location>
</feature>
<feature type="compositionally biased region" description="Gly residues" evidence="3">
    <location>
        <begin position="228"/>
        <end position="246"/>
    </location>
</feature>
<feature type="compositionally biased region" description="Basic residues" evidence="3">
    <location>
        <begin position="251"/>
        <end position="260"/>
    </location>
</feature>
<feature type="binding site" evidence="2">
    <location>
        <begin position="381"/>
        <end position="388"/>
    </location>
    <ligand>
        <name>GTP</name>
        <dbReference type="ChEBI" id="CHEBI:37565"/>
    </ligand>
</feature>
<feature type="binding site" evidence="2">
    <location>
        <begin position="431"/>
        <end position="435"/>
    </location>
    <ligand>
        <name>GTP</name>
        <dbReference type="ChEBI" id="CHEBI:37565"/>
    </ligand>
</feature>
<feature type="binding site" evidence="2">
    <location>
        <begin position="485"/>
        <end position="488"/>
    </location>
    <ligand>
        <name>GTP</name>
        <dbReference type="ChEBI" id="CHEBI:37565"/>
    </ligand>
</feature>
<reference key="1">
    <citation type="journal article" date="2009" name="Genome Res.">
        <title>Complete genome of the cellulolytic thermophile Acidothermus cellulolyticus 11B provides insights into its ecophysiological and evolutionary adaptations.</title>
        <authorList>
            <person name="Barabote R.D."/>
            <person name="Xie G."/>
            <person name="Leu D.H."/>
            <person name="Normand P."/>
            <person name="Necsulea A."/>
            <person name="Daubin V."/>
            <person name="Medigue C."/>
            <person name="Adney W.S."/>
            <person name="Xu X.C."/>
            <person name="Lapidus A."/>
            <person name="Parales R.E."/>
            <person name="Detter C."/>
            <person name="Pujic P."/>
            <person name="Bruce D."/>
            <person name="Lavire C."/>
            <person name="Challacombe J.F."/>
            <person name="Brettin T.S."/>
            <person name="Berry A.M."/>
        </authorList>
    </citation>
    <scope>NUCLEOTIDE SEQUENCE [LARGE SCALE GENOMIC DNA]</scope>
    <source>
        <strain>ATCC 43068 / DSM 8971 / 11B</strain>
    </source>
</reference>
<evidence type="ECO:0000250" key="1"/>
<evidence type="ECO:0000255" key="2">
    <source>
        <dbReference type="HAMAP-Rule" id="MF_00100"/>
    </source>
</evidence>
<evidence type="ECO:0000256" key="3">
    <source>
        <dbReference type="SAM" id="MobiDB-lite"/>
    </source>
</evidence>